<keyword id="KW-0963">Cytoplasm</keyword>
<keyword id="KW-0690">Ribosome biogenesis</keyword>
<keyword id="KW-0698">rRNA processing</keyword>
<keyword id="KW-0949">S-adenosyl-L-methionine</keyword>
<keyword id="KW-0808">Transferase</keyword>
<gene>
    <name type="ordered locus">M1425_1577</name>
</gene>
<name>TSR3_SACI4</name>
<protein>
    <recommendedName>
        <fullName evidence="2 3">16S rRNA aminocarboxypropyltransferase</fullName>
        <ecNumber evidence="2">2.5.1.157</ecNumber>
    </recommendedName>
</protein>
<accession>C3MWA4</accession>
<comment type="function">
    <text evidence="2">Aminocarboxypropyltransferase that catalyzes the aminocarboxypropyl transfer on pseudouridine corresponding to position 914 in M.jannaschii 16S rRNA. It constitutes the last step in biosynthesis of the hypermodified N1-methyl-N3-(3-amino-3-carboxypropyl) pseudouridine (m1acp3-Psi).</text>
</comment>
<comment type="catalytic activity">
    <reaction evidence="2">
        <text>an N(1)-methylpseudouridine in rRNA + S-adenosyl-L-methionine = N(1)-methyl-N(3)-[(3S)-3-amino-3-carboxypropyl]pseudouridine in rRNA + S-methyl-5'-thioadenosine + H(+)</text>
        <dbReference type="Rhea" id="RHEA:63296"/>
        <dbReference type="Rhea" id="RHEA-COMP:11634"/>
        <dbReference type="Rhea" id="RHEA-COMP:16310"/>
        <dbReference type="ChEBI" id="CHEBI:15378"/>
        <dbReference type="ChEBI" id="CHEBI:17509"/>
        <dbReference type="ChEBI" id="CHEBI:59789"/>
        <dbReference type="ChEBI" id="CHEBI:74890"/>
        <dbReference type="ChEBI" id="CHEBI:146234"/>
        <dbReference type="EC" id="2.5.1.157"/>
    </reaction>
</comment>
<comment type="subcellular location">
    <subcellularLocation>
        <location evidence="2">Cytoplasm</location>
    </subcellularLocation>
</comment>
<comment type="similarity">
    <text evidence="2">Belongs to the TDD superfamily. TSR3 family.</text>
</comment>
<proteinExistence type="inferred from homology"/>
<feature type="chain" id="PRO_1000213602" description="16S rRNA aminocarboxypropyltransferase">
    <location>
        <begin position="1"/>
        <end position="166"/>
    </location>
</feature>
<feature type="binding site" evidence="1 2">
    <location>
        <position position="17"/>
    </location>
    <ligand>
        <name>S-adenosyl-L-methionine</name>
        <dbReference type="ChEBI" id="CHEBI:59789"/>
    </ligand>
</feature>
<feature type="binding site" evidence="1 2">
    <location>
        <position position="62"/>
    </location>
    <ligand>
        <name>S-adenosyl-L-methionine</name>
        <dbReference type="ChEBI" id="CHEBI:59789"/>
    </ligand>
</feature>
<feature type="binding site" evidence="1 2">
    <location>
        <position position="84"/>
    </location>
    <ligand>
        <name>S-adenosyl-L-methionine</name>
        <dbReference type="ChEBI" id="CHEBI:59789"/>
    </ligand>
</feature>
<feature type="binding site" evidence="1 2">
    <location>
        <position position="99"/>
    </location>
    <ligand>
        <name>S-adenosyl-L-methionine</name>
        <dbReference type="ChEBI" id="CHEBI:59789"/>
    </ligand>
</feature>
<feature type="binding site" evidence="2">
    <location>
        <position position="103"/>
    </location>
    <ligand>
        <name>S-adenosyl-L-methionine</name>
        <dbReference type="ChEBI" id="CHEBI:59789"/>
    </ligand>
</feature>
<organism>
    <name type="scientific">Saccharolobus islandicus (strain M.14.25 / Kamchatka #1)</name>
    <name type="common">Sulfolobus islandicus</name>
    <dbReference type="NCBI Taxonomy" id="427317"/>
    <lineage>
        <taxon>Archaea</taxon>
        <taxon>Thermoproteota</taxon>
        <taxon>Thermoprotei</taxon>
        <taxon>Sulfolobales</taxon>
        <taxon>Sulfolobaceae</taxon>
        <taxon>Saccharolobus</taxon>
    </lineage>
</organism>
<evidence type="ECO:0000250" key="1">
    <source>
        <dbReference type="UniProtKB" id="E1QU22"/>
    </source>
</evidence>
<evidence type="ECO:0000255" key="2">
    <source>
        <dbReference type="HAMAP-Rule" id="MF_01116"/>
    </source>
</evidence>
<evidence type="ECO:0000305" key="3"/>
<reference key="1">
    <citation type="journal article" date="2009" name="Proc. Natl. Acad. Sci. U.S.A.">
        <title>Biogeography of the Sulfolobus islandicus pan-genome.</title>
        <authorList>
            <person name="Reno M.L."/>
            <person name="Held N.L."/>
            <person name="Fields C.J."/>
            <person name="Burke P.V."/>
            <person name="Whitaker R.J."/>
        </authorList>
    </citation>
    <scope>NUCLEOTIDE SEQUENCE [LARGE SCALE GENOMIC DNA]</scope>
    <source>
        <strain>M.14.25 / Kamchatka #1</strain>
    </source>
</reference>
<dbReference type="EC" id="2.5.1.157" evidence="2"/>
<dbReference type="EMBL" id="CP001400">
    <property type="protein sequence ID" value="ACP38326.1"/>
    <property type="molecule type" value="Genomic_DNA"/>
</dbReference>
<dbReference type="RefSeq" id="WP_012711570.1">
    <property type="nucleotide sequence ID" value="NC_012588.1"/>
</dbReference>
<dbReference type="SMR" id="C3MWA4"/>
<dbReference type="KEGG" id="sia:M1425_1577"/>
<dbReference type="HOGENOM" id="CLU_035060_4_1_2"/>
<dbReference type="Proteomes" id="UP000001350">
    <property type="component" value="Chromosome"/>
</dbReference>
<dbReference type="GO" id="GO:0005737">
    <property type="term" value="C:cytoplasm"/>
    <property type="evidence" value="ECO:0007669"/>
    <property type="project" value="UniProtKB-SubCell"/>
</dbReference>
<dbReference type="GO" id="GO:0106388">
    <property type="term" value="F:18S rRNA aminocarboxypropyltransferase activity"/>
    <property type="evidence" value="ECO:0007669"/>
    <property type="project" value="InterPro"/>
</dbReference>
<dbReference type="GO" id="GO:1904047">
    <property type="term" value="F:S-adenosyl-L-methionine binding"/>
    <property type="evidence" value="ECO:0007669"/>
    <property type="project" value="UniProtKB-UniRule"/>
</dbReference>
<dbReference type="GO" id="GO:0000455">
    <property type="term" value="P:enzyme-directed rRNA pseudouridine synthesis"/>
    <property type="evidence" value="ECO:0007669"/>
    <property type="project" value="UniProtKB-UniRule"/>
</dbReference>
<dbReference type="HAMAP" id="MF_01116">
    <property type="entry name" value="TSR3"/>
    <property type="match status" value="1"/>
</dbReference>
<dbReference type="InterPro" id="IPR007209">
    <property type="entry name" value="RNaseL-inhib-like_metal-bd_dom"/>
</dbReference>
<dbReference type="InterPro" id="IPR022968">
    <property type="entry name" value="Tsr3-like"/>
</dbReference>
<dbReference type="InterPro" id="IPR007177">
    <property type="entry name" value="Tsr3_C"/>
</dbReference>
<dbReference type="NCBIfam" id="NF002621">
    <property type="entry name" value="PRK02287.1"/>
    <property type="match status" value="1"/>
</dbReference>
<dbReference type="PANTHER" id="PTHR20426:SF0">
    <property type="entry name" value="18S RRNA AMINOCARBOXYPROPYLTRANSFERASE"/>
    <property type="match status" value="1"/>
</dbReference>
<dbReference type="PANTHER" id="PTHR20426">
    <property type="entry name" value="RIBOSOME BIOGENESIS PROTEIN TSR3 HOMOLOG"/>
    <property type="match status" value="1"/>
</dbReference>
<dbReference type="Pfam" id="PF04068">
    <property type="entry name" value="Fer4_RLI"/>
    <property type="match status" value="1"/>
</dbReference>
<dbReference type="Pfam" id="PF04034">
    <property type="entry name" value="Ribo_biogen_C"/>
    <property type="match status" value="1"/>
</dbReference>
<sequence>MKVYVIDYHKDDPKKCTGRKLVKLKLAELTRVGRGIILNPFSERTLSINDKDILIKSGITIIDTSWNNTSQNEFKNVRGEHRRLPILFAGNPIHYGIAYKLSSLEALMATLYILDEVKEAIKFSNVVKWGHTFIELNKELLEAYRNKDEEEIKKIEKEIIEKILRK</sequence>